<comment type="function">
    <text evidence="1">Bidirectionally degrades single-stranded DNA into large acid-insoluble oligonucleotides, which are then degraded further into small acid-soluble oligonucleotides.</text>
</comment>
<comment type="catalytic activity">
    <reaction evidence="1">
        <text>Exonucleolytic cleavage in either 5'- to 3'- or 3'- to 5'-direction to yield nucleoside 5'-phosphates.</text>
        <dbReference type="EC" id="3.1.11.6"/>
    </reaction>
</comment>
<comment type="subunit">
    <text evidence="1">Heterooligomer composed of large and small subunits.</text>
</comment>
<comment type="subcellular location">
    <subcellularLocation>
        <location evidence="1">Cytoplasm</location>
    </subcellularLocation>
</comment>
<comment type="similarity">
    <text evidence="1">Belongs to the XseB family.</text>
</comment>
<name>EX7S_PSEFS</name>
<accession>C3K2Q9</accession>
<dbReference type="EC" id="3.1.11.6" evidence="1"/>
<dbReference type="EMBL" id="AM181176">
    <property type="protein sequence ID" value="CAY52661.1"/>
    <property type="molecule type" value="Genomic_DNA"/>
</dbReference>
<dbReference type="RefSeq" id="WP_003176346.1">
    <property type="nucleotide sequence ID" value="NC_012660.1"/>
</dbReference>
<dbReference type="SMR" id="C3K2Q9"/>
<dbReference type="STRING" id="294.SRM1_05097"/>
<dbReference type="eggNOG" id="COG1722">
    <property type="taxonomic scope" value="Bacteria"/>
</dbReference>
<dbReference type="HOGENOM" id="CLU_145918_3_3_6"/>
<dbReference type="OrthoDB" id="9801128at2"/>
<dbReference type="GO" id="GO:0005829">
    <property type="term" value="C:cytosol"/>
    <property type="evidence" value="ECO:0007669"/>
    <property type="project" value="TreeGrafter"/>
</dbReference>
<dbReference type="GO" id="GO:0009318">
    <property type="term" value="C:exodeoxyribonuclease VII complex"/>
    <property type="evidence" value="ECO:0007669"/>
    <property type="project" value="InterPro"/>
</dbReference>
<dbReference type="GO" id="GO:0008855">
    <property type="term" value="F:exodeoxyribonuclease VII activity"/>
    <property type="evidence" value="ECO:0007669"/>
    <property type="project" value="UniProtKB-UniRule"/>
</dbReference>
<dbReference type="GO" id="GO:0006308">
    <property type="term" value="P:DNA catabolic process"/>
    <property type="evidence" value="ECO:0007669"/>
    <property type="project" value="UniProtKB-UniRule"/>
</dbReference>
<dbReference type="Gene3D" id="1.10.287.1040">
    <property type="entry name" value="Exonuclease VII, small subunit"/>
    <property type="match status" value="1"/>
</dbReference>
<dbReference type="HAMAP" id="MF_00337">
    <property type="entry name" value="Exonuc_7_S"/>
    <property type="match status" value="1"/>
</dbReference>
<dbReference type="InterPro" id="IPR003761">
    <property type="entry name" value="Exonuc_VII_S"/>
</dbReference>
<dbReference type="InterPro" id="IPR037004">
    <property type="entry name" value="Exonuc_VII_ssu_sf"/>
</dbReference>
<dbReference type="NCBIfam" id="NF002140">
    <property type="entry name" value="PRK00977.1-4"/>
    <property type="match status" value="1"/>
</dbReference>
<dbReference type="NCBIfam" id="TIGR01280">
    <property type="entry name" value="xseB"/>
    <property type="match status" value="1"/>
</dbReference>
<dbReference type="PANTHER" id="PTHR34137">
    <property type="entry name" value="EXODEOXYRIBONUCLEASE 7 SMALL SUBUNIT"/>
    <property type="match status" value="1"/>
</dbReference>
<dbReference type="PANTHER" id="PTHR34137:SF1">
    <property type="entry name" value="EXODEOXYRIBONUCLEASE 7 SMALL SUBUNIT"/>
    <property type="match status" value="1"/>
</dbReference>
<dbReference type="Pfam" id="PF02609">
    <property type="entry name" value="Exonuc_VII_S"/>
    <property type="match status" value="1"/>
</dbReference>
<dbReference type="PIRSF" id="PIRSF006488">
    <property type="entry name" value="Exonuc_VII_S"/>
    <property type="match status" value="1"/>
</dbReference>
<dbReference type="SUPFAM" id="SSF116842">
    <property type="entry name" value="XseB-like"/>
    <property type="match status" value="1"/>
</dbReference>
<gene>
    <name evidence="1" type="primary">xseB</name>
    <name type="ordered locus">PFLU_5460</name>
</gene>
<keyword id="KW-0963">Cytoplasm</keyword>
<keyword id="KW-0269">Exonuclease</keyword>
<keyword id="KW-0378">Hydrolase</keyword>
<keyword id="KW-0540">Nuclease</keyword>
<evidence type="ECO:0000255" key="1">
    <source>
        <dbReference type="HAMAP-Rule" id="MF_00337"/>
    </source>
</evidence>
<sequence>MARKKVALDFEQSLADLQTLVERLENGELSLEDSLTAFEQGIGLTRDCQSALAQAEQKVQVLLERDGELAEEPFDAEQPE</sequence>
<protein>
    <recommendedName>
        <fullName evidence="1">Exodeoxyribonuclease 7 small subunit</fullName>
        <ecNumber evidence="1">3.1.11.6</ecNumber>
    </recommendedName>
    <alternativeName>
        <fullName evidence="1">Exodeoxyribonuclease VII small subunit</fullName>
        <shortName evidence="1">Exonuclease VII small subunit</shortName>
    </alternativeName>
</protein>
<organism>
    <name type="scientific">Pseudomonas fluorescens (strain SBW25)</name>
    <dbReference type="NCBI Taxonomy" id="216595"/>
    <lineage>
        <taxon>Bacteria</taxon>
        <taxon>Pseudomonadati</taxon>
        <taxon>Pseudomonadota</taxon>
        <taxon>Gammaproteobacteria</taxon>
        <taxon>Pseudomonadales</taxon>
        <taxon>Pseudomonadaceae</taxon>
        <taxon>Pseudomonas</taxon>
    </lineage>
</organism>
<proteinExistence type="inferred from homology"/>
<feature type="chain" id="PRO_1000205232" description="Exodeoxyribonuclease 7 small subunit">
    <location>
        <begin position="1"/>
        <end position="80"/>
    </location>
</feature>
<reference key="1">
    <citation type="journal article" date="2009" name="Genome Biol.">
        <title>Genomic and genetic analyses of diversity and plant interactions of Pseudomonas fluorescens.</title>
        <authorList>
            <person name="Silby M.W."/>
            <person name="Cerdeno-Tarraga A.M."/>
            <person name="Vernikos G.S."/>
            <person name="Giddens S.R."/>
            <person name="Jackson R.W."/>
            <person name="Preston G.M."/>
            <person name="Zhang X.-X."/>
            <person name="Moon C.D."/>
            <person name="Gehrig S.M."/>
            <person name="Godfrey S.A.C."/>
            <person name="Knight C.G."/>
            <person name="Malone J.G."/>
            <person name="Robinson Z."/>
            <person name="Spiers A.J."/>
            <person name="Harris S."/>
            <person name="Challis G.L."/>
            <person name="Yaxley A.M."/>
            <person name="Harris D."/>
            <person name="Seeger K."/>
            <person name="Murphy L."/>
            <person name="Rutter S."/>
            <person name="Squares R."/>
            <person name="Quail M.A."/>
            <person name="Saunders E."/>
            <person name="Mavromatis K."/>
            <person name="Brettin T.S."/>
            <person name="Bentley S.D."/>
            <person name="Hothersall J."/>
            <person name="Stephens E."/>
            <person name="Thomas C.M."/>
            <person name="Parkhill J."/>
            <person name="Levy S.B."/>
            <person name="Rainey P.B."/>
            <person name="Thomson N.R."/>
        </authorList>
    </citation>
    <scope>NUCLEOTIDE SEQUENCE [LARGE SCALE GENOMIC DNA]</scope>
    <source>
        <strain>SBW25</strain>
    </source>
</reference>